<proteinExistence type="inferred from homology"/>
<sequence length="179" mass="20113">MLAALYYVLKGDPYKALKEDLESLKKAKLLTEDLRITEKGMELIQQLISKPISLKGKVVSGDGEGRYYLSLEGYRRQVREKLGFDPFPGTLNVLLDPTSTEKKSTLMFKRPIILKGFTENGKRYGEVLAFPARVSGVEAALVIPLKTHHPPEIIELISPVELRKALKLKDGDEVEVLVY</sequence>
<comment type="function">
    <text evidence="1">Catalyzes the CTP-dependent phosphorylation of riboflavin (vitamin B2) to form flavin mononucleotide (FMN).</text>
</comment>
<comment type="catalytic activity">
    <reaction evidence="1">
        <text>riboflavin + CTP = CDP + FMN + H(+)</text>
        <dbReference type="Rhea" id="RHEA:25021"/>
        <dbReference type="ChEBI" id="CHEBI:15378"/>
        <dbReference type="ChEBI" id="CHEBI:37563"/>
        <dbReference type="ChEBI" id="CHEBI:57986"/>
        <dbReference type="ChEBI" id="CHEBI:58069"/>
        <dbReference type="ChEBI" id="CHEBI:58210"/>
        <dbReference type="EC" id="2.7.1.161"/>
    </reaction>
</comment>
<comment type="cofactor">
    <cofactor evidence="1">
        <name>Mg(2+)</name>
        <dbReference type="ChEBI" id="CHEBI:18420"/>
    </cofactor>
    <text evidence="1">Binds 1 Mg(2+) ion per subunit.</text>
</comment>
<comment type="pathway">
    <text evidence="1">Cofactor biosynthesis; FMN biosynthesis; FMN from riboflavin (CTP route): step 1/1.</text>
</comment>
<comment type="similarity">
    <text evidence="1">Belongs to the archaeal riboflavin kinase family.</text>
</comment>
<protein>
    <recommendedName>
        <fullName evidence="1">Riboflavin kinase</fullName>
        <shortName evidence="1">RFK</shortName>
        <ecNumber evidence="1">2.7.1.161</ecNumber>
    </recommendedName>
    <alternativeName>
        <fullName evidence="1">CTP-dependent riboflavin kinase</fullName>
    </alternativeName>
    <alternativeName>
        <fullName evidence="1">CTP:riboflavin 5'-phosphotransferase</fullName>
    </alternativeName>
    <alternativeName>
        <fullName evidence="1">Flavokinase</fullName>
    </alternativeName>
</protein>
<keyword id="KW-0285">Flavoprotein</keyword>
<keyword id="KW-0288">FMN</keyword>
<keyword id="KW-0418">Kinase</keyword>
<keyword id="KW-0460">Magnesium</keyword>
<keyword id="KW-0479">Metal-binding</keyword>
<keyword id="KW-0547">Nucleotide-binding</keyword>
<keyword id="KW-1185">Reference proteome</keyword>
<keyword id="KW-0808">Transferase</keyword>
<gene>
    <name evidence="1" type="primary">ribK</name>
    <name type="ordered locus">Igni_0547</name>
</gene>
<organism>
    <name type="scientific">Ignicoccus hospitalis (strain KIN4/I / DSM 18386 / JCM 14125)</name>
    <dbReference type="NCBI Taxonomy" id="453591"/>
    <lineage>
        <taxon>Archaea</taxon>
        <taxon>Thermoproteota</taxon>
        <taxon>Thermoprotei</taxon>
        <taxon>Desulfurococcales</taxon>
        <taxon>Desulfurococcaceae</taxon>
        <taxon>Ignicoccus</taxon>
    </lineage>
</organism>
<reference key="1">
    <citation type="journal article" date="2008" name="Genome Biol.">
        <title>A genomic analysis of the archaeal system Ignicoccus hospitalis-Nanoarchaeum equitans.</title>
        <authorList>
            <person name="Podar M."/>
            <person name="Anderson I."/>
            <person name="Makarova K.S."/>
            <person name="Elkins J.G."/>
            <person name="Ivanova N."/>
            <person name="Wall M.A."/>
            <person name="Lykidis A."/>
            <person name="Mavromatis K."/>
            <person name="Sun H."/>
            <person name="Hudson M.E."/>
            <person name="Chen W."/>
            <person name="Deciu C."/>
            <person name="Hutchison D."/>
            <person name="Eads J.R."/>
            <person name="Anderson A."/>
            <person name="Fernandes F."/>
            <person name="Szeto E."/>
            <person name="Lapidus A."/>
            <person name="Kyrpides N.C."/>
            <person name="Saier M.H. Jr."/>
            <person name="Richardson P.M."/>
            <person name="Rachel R."/>
            <person name="Huber H."/>
            <person name="Eisen J.A."/>
            <person name="Koonin E.V."/>
            <person name="Keller M."/>
            <person name="Stetter K.O."/>
        </authorList>
    </citation>
    <scope>NUCLEOTIDE SEQUENCE [LARGE SCALE GENOMIC DNA]</scope>
    <source>
        <strain>KIN4/I / DSM 18386 / JCM 14125</strain>
    </source>
</reference>
<feature type="chain" id="PRO_0000322067" description="Riboflavin kinase">
    <location>
        <begin position="1"/>
        <end position="179"/>
    </location>
</feature>
<feature type="binding site" evidence="1">
    <location>
        <begin position="61"/>
        <end position="66"/>
    </location>
    <ligand>
        <name>CDP</name>
        <dbReference type="ChEBI" id="CHEBI:58069"/>
    </ligand>
</feature>
<feature type="binding site" evidence="1">
    <location>
        <position position="90"/>
    </location>
    <ligand>
        <name>Mg(2+)</name>
        <dbReference type="ChEBI" id="CHEBI:18420"/>
    </ligand>
</feature>
<feature type="binding site" evidence="1">
    <location>
        <position position="92"/>
    </location>
    <ligand>
        <name>Mg(2+)</name>
        <dbReference type="ChEBI" id="CHEBI:18420"/>
    </ligand>
</feature>
<feature type="binding site" evidence="1">
    <location>
        <position position="147"/>
    </location>
    <ligand>
        <name>FMN</name>
        <dbReference type="ChEBI" id="CHEBI:58210"/>
    </ligand>
</feature>
<feature type="binding site" evidence="1">
    <location>
        <position position="155"/>
    </location>
    <ligand>
        <name>FMN</name>
        <dbReference type="ChEBI" id="CHEBI:58210"/>
    </ligand>
</feature>
<feature type="binding site" evidence="1">
    <location>
        <begin position="160"/>
        <end position="163"/>
    </location>
    <ligand>
        <name>CDP</name>
        <dbReference type="ChEBI" id="CHEBI:58069"/>
    </ligand>
</feature>
<accession>A8A9X7</accession>
<name>RIFK_IGNH4</name>
<evidence type="ECO:0000255" key="1">
    <source>
        <dbReference type="HAMAP-Rule" id="MF_01285"/>
    </source>
</evidence>
<dbReference type="EC" id="2.7.1.161" evidence="1"/>
<dbReference type="EMBL" id="CP000816">
    <property type="protein sequence ID" value="ABU81729.1"/>
    <property type="molecule type" value="Genomic_DNA"/>
</dbReference>
<dbReference type="RefSeq" id="WP_011998581.1">
    <property type="nucleotide sequence ID" value="NC_009776.1"/>
</dbReference>
<dbReference type="SMR" id="A8A9X7"/>
<dbReference type="STRING" id="453591.Igni_0547"/>
<dbReference type="GeneID" id="5562129"/>
<dbReference type="KEGG" id="iho:Igni_0547"/>
<dbReference type="eggNOG" id="arCOG01904">
    <property type="taxonomic scope" value="Archaea"/>
</dbReference>
<dbReference type="HOGENOM" id="CLU_088476_0_0_2"/>
<dbReference type="OrthoDB" id="30955at2157"/>
<dbReference type="PhylomeDB" id="A8A9X7"/>
<dbReference type="UniPathway" id="UPA00276">
    <property type="reaction ID" value="UER00929"/>
</dbReference>
<dbReference type="Proteomes" id="UP000000262">
    <property type="component" value="Chromosome"/>
</dbReference>
<dbReference type="GO" id="GO:0000287">
    <property type="term" value="F:magnesium ion binding"/>
    <property type="evidence" value="ECO:0007669"/>
    <property type="project" value="UniProtKB-UniRule"/>
</dbReference>
<dbReference type="GO" id="GO:0000166">
    <property type="term" value="F:nucleotide binding"/>
    <property type="evidence" value="ECO:0007669"/>
    <property type="project" value="UniProtKB-UniRule"/>
</dbReference>
<dbReference type="GO" id="GO:0008531">
    <property type="term" value="F:riboflavin kinase activity"/>
    <property type="evidence" value="ECO:0007669"/>
    <property type="project" value="InterPro"/>
</dbReference>
<dbReference type="GO" id="GO:0009398">
    <property type="term" value="P:FMN biosynthetic process"/>
    <property type="evidence" value="ECO:0007669"/>
    <property type="project" value="UniProtKB-UniRule"/>
</dbReference>
<dbReference type="GO" id="GO:0009231">
    <property type="term" value="P:riboflavin biosynthetic process"/>
    <property type="evidence" value="ECO:0007669"/>
    <property type="project" value="InterPro"/>
</dbReference>
<dbReference type="Gene3D" id="2.40.30.30">
    <property type="entry name" value="Riboflavin kinase-like"/>
    <property type="match status" value="1"/>
</dbReference>
<dbReference type="HAMAP" id="MF_01285">
    <property type="entry name" value="Riboflavin_kinase"/>
    <property type="match status" value="1"/>
</dbReference>
<dbReference type="InterPro" id="IPR039063">
    <property type="entry name" value="RibK_CTP-dep"/>
</dbReference>
<dbReference type="InterPro" id="IPR023470">
    <property type="entry name" value="Riboflavin_kinase_archaeal"/>
</dbReference>
<dbReference type="InterPro" id="IPR023602">
    <property type="entry name" value="Riboflavin_kinase_CTP-dep"/>
</dbReference>
<dbReference type="InterPro" id="IPR023465">
    <property type="entry name" value="Riboflavin_kinase_dom_sf"/>
</dbReference>
<dbReference type="PANTHER" id="PTHR40706">
    <property type="entry name" value="RIBOFLAVIN KINASE"/>
    <property type="match status" value="1"/>
</dbReference>
<dbReference type="PANTHER" id="PTHR40706:SF1">
    <property type="entry name" value="RIBOFLAVIN KINASE"/>
    <property type="match status" value="1"/>
</dbReference>
<dbReference type="Pfam" id="PF01982">
    <property type="entry name" value="CTP-dep_RFKase"/>
    <property type="match status" value="1"/>
</dbReference>
<dbReference type="SUPFAM" id="SSF82114">
    <property type="entry name" value="Riboflavin kinase-like"/>
    <property type="match status" value="1"/>
</dbReference>